<protein>
    <recommendedName>
        <fullName evidence="1">NAD kinase</fullName>
        <ecNumber evidence="1">2.7.1.23</ecNumber>
    </recommendedName>
    <alternativeName>
        <fullName evidence="1">ATP-dependent NAD kinase</fullName>
    </alternativeName>
</protein>
<evidence type="ECO:0000255" key="1">
    <source>
        <dbReference type="HAMAP-Rule" id="MF_00361"/>
    </source>
</evidence>
<comment type="function">
    <text evidence="1">Involved in the regulation of the intracellular balance of NAD and NADP, and is a key enzyme in the biosynthesis of NADP. Catalyzes specifically the phosphorylation on 2'-hydroxyl of the adenosine moiety of NAD to yield NADP.</text>
</comment>
<comment type="catalytic activity">
    <reaction evidence="1">
        <text>NAD(+) + ATP = ADP + NADP(+) + H(+)</text>
        <dbReference type="Rhea" id="RHEA:18629"/>
        <dbReference type="ChEBI" id="CHEBI:15378"/>
        <dbReference type="ChEBI" id="CHEBI:30616"/>
        <dbReference type="ChEBI" id="CHEBI:57540"/>
        <dbReference type="ChEBI" id="CHEBI:58349"/>
        <dbReference type="ChEBI" id="CHEBI:456216"/>
        <dbReference type="EC" id="2.7.1.23"/>
    </reaction>
</comment>
<comment type="cofactor">
    <cofactor evidence="1">
        <name>a divalent metal cation</name>
        <dbReference type="ChEBI" id="CHEBI:60240"/>
    </cofactor>
</comment>
<comment type="subcellular location">
    <subcellularLocation>
        <location evidence="1">Cytoplasm</location>
    </subcellularLocation>
</comment>
<comment type="similarity">
    <text evidence="1">Belongs to the NAD kinase family.</text>
</comment>
<keyword id="KW-0067">ATP-binding</keyword>
<keyword id="KW-0963">Cytoplasm</keyword>
<keyword id="KW-0418">Kinase</keyword>
<keyword id="KW-0520">NAD</keyword>
<keyword id="KW-0521">NADP</keyword>
<keyword id="KW-0547">Nucleotide-binding</keyword>
<keyword id="KW-1185">Reference proteome</keyword>
<keyword id="KW-0808">Transferase</keyword>
<name>NADK_STRA5</name>
<reference key="1">
    <citation type="journal article" date="2002" name="Proc. Natl. Acad. Sci. U.S.A.">
        <title>Complete genome sequence and comparative genomic analysis of an emerging human pathogen, serotype V Streptococcus agalactiae.</title>
        <authorList>
            <person name="Tettelin H."/>
            <person name="Masignani V."/>
            <person name="Cieslewicz M.J."/>
            <person name="Eisen J.A."/>
            <person name="Peterson S.N."/>
            <person name="Wessels M.R."/>
            <person name="Paulsen I.T."/>
            <person name="Nelson K.E."/>
            <person name="Margarit I."/>
            <person name="Read T.D."/>
            <person name="Madoff L.C."/>
            <person name="Wolf A.M."/>
            <person name="Beanan M.J."/>
            <person name="Brinkac L.M."/>
            <person name="Daugherty S.C."/>
            <person name="DeBoy R.T."/>
            <person name="Durkin A.S."/>
            <person name="Kolonay J.F."/>
            <person name="Madupu R."/>
            <person name="Lewis M.R."/>
            <person name="Radune D."/>
            <person name="Fedorova N.B."/>
            <person name="Scanlan D."/>
            <person name="Khouri H.M."/>
            <person name="Mulligan S."/>
            <person name="Carty H.A."/>
            <person name="Cline R.T."/>
            <person name="Van Aken S.E."/>
            <person name="Gill J."/>
            <person name="Scarselli M."/>
            <person name="Mora M."/>
            <person name="Iacobini E.T."/>
            <person name="Brettoni C."/>
            <person name="Galli G."/>
            <person name="Mariani M."/>
            <person name="Vegni F."/>
            <person name="Maione D."/>
            <person name="Rinaudo D."/>
            <person name="Rappuoli R."/>
            <person name="Telford J.L."/>
            <person name="Kasper D.L."/>
            <person name="Grandi G."/>
            <person name="Fraser C.M."/>
        </authorList>
    </citation>
    <scope>NUCLEOTIDE SEQUENCE [LARGE SCALE GENOMIC DNA]</scope>
    <source>
        <strain>ATCC BAA-611 / 2603 V/R</strain>
    </source>
</reference>
<accession>Q8DZK7</accession>
<gene>
    <name evidence="1" type="primary">nadK</name>
    <name type="ordered locus">SAG1094</name>
</gene>
<feature type="chain" id="PRO_0000229693" description="NAD kinase">
    <location>
        <begin position="1"/>
        <end position="278"/>
    </location>
</feature>
<feature type="active site" description="Proton acceptor" evidence="1">
    <location>
        <position position="56"/>
    </location>
</feature>
<feature type="binding site" evidence="1">
    <location>
        <begin position="56"/>
        <end position="57"/>
    </location>
    <ligand>
        <name>NAD(+)</name>
        <dbReference type="ChEBI" id="CHEBI:57540"/>
    </ligand>
</feature>
<feature type="binding site" evidence="1">
    <location>
        <begin position="132"/>
        <end position="133"/>
    </location>
    <ligand>
        <name>NAD(+)</name>
        <dbReference type="ChEBI" id="CHEBI:57540"/>
    </ligand>
</feature>
<feature type="binding site" evidence="1">
    <location>
        <position position="158"/>
    </location>
    <ligand>
        <name>NAD(+)</name>
        <dbReference type="ChEBI" id="CHEBI:57540"/>
    </ligand>
</feature>
<feature type="binding site" evidence="1">
    <location>
        <position position="160"/>
    </location>
    <ligand>
        <name>NAD(+)</name>
        <dbReference type="ChEBI" id="CHEBI:57540"/>
    </ligand>
</feature>
<feature type="binding site" evidence="1">
    <location>
        <begin position="171"/>
        <end position="176"/>
    </location>
    <ligand>
        <name>NAD(+)</name>
        <dbReference type="ChEBI" id="CHEBI:57540"/>
    </ligand>
</feature>
<proteinExistence type="inferred from homology"/>
<sequence>MTQMNFTDRATRVAIIANGKYQSKRVASKLFAAFKHDPDFYLSKKDPDIVISIGGDGMLLSAFHMYEKQLDKVRFVGVHTGHLGFYTDYRDFEVDTLINNLKNDKGEQISYPILKVTITLEDGRVIRARALNESTIKRIEKTMVADVVINQVVFERFRGDGILVSTPTGSTAYNKSLGGAVLHPTIEALQLTEISSLNNRVYRTLGSSVIIPKKDAIEIVPKRVGVYTISIDNKTVHYKNVTKIEYSIDEKSINFVSTPSHTSFWERVNDAFIGEPEH</sequence>
<organism>
    <name type="scientific">Streptococcus agalactiae serotype V (strain ATCC BAA-611 / 2603 V/R)</name>
    <dbReference type="NCBI Taxonomy" id="208435"/>
    <lineage>
        <taxon>Bacteria</taxon>
        <taxon>Bacillati</taxon>
        <taxon>Bacillota</taxon>
        <taxon>Bacilli</taxon>
        <taxon>Lactobacillales</taxon>
        <taxon>Streptococcaceae</taxon>
        <taxon>Streptococcus</taxon>
    </lineage>
</organism>
<dbReference type="EC" id="2.7.1.23" evidence="1"/>
<dbReference type="EMBL" id="AE009948">
    <property type="protein sequence ID" value="AAM99975.1"/>
    <property type="molecule type" value="Genomic_DNA"/>
</dbReference>
<dbReference type="RefSeq" id="NP_688103.1">
    <property type="nucleotide sequence ID" value="NC_004116.1"/>
</dbReference>
<dbReference type="RefSeq" id="WP_000192910.1">
    <property type="nucleotide sequence ID" value="NC_004116.1"/>
</dbReference>
<dbReference type="SMR" id="Q8DZK7"/>
<dbReference type="STRING" id="208435.SAG1094"/>
<dbReference type="GeneID" id="66886019"/>
<dbReference type="KEGG" id="sag:SAG1094"/>
<dbReference type="PATRIC" id="fig|208435.3.peg.1102"/>
<dbReference type="HOGENOM" id="CLU_008831_0_3_9"/>
<dbReference type="OrthoDB" id="9774737at2"/>
<dbReference type="Proteomes" id="UP000000821">
    <property type="component" value="Chromosome"/>
</dbReference>
<dbReference type="GO" id="GO:0005737">
    <property type="term" value="C:cytoplasm"/>
    <property type="evidence" value="ECO:0007669"/>
    <property type="project" value="UniProtKB-SubCell"/>
</dbReference>
<dbReference type="GO" id="GO:0005524">
    <property type="term" value="F:ATP binding"/>
    <property type="evidence" value="ECO:0007669"/>
    <property type="project" value="UniProtKB-KW"/>
</dbReference>
<dbReference type="GO" id="GO:0046872">
    <property type="term" value="F:metal ion binding"/>
    <property type="evidence" value="ECO:0007669"/>
    <property type="project" value="UniProtKB-UniRule"/>
</dbReference>
<dbReference type="GO" id="GO:0051287">
    <property type="term" value="F:NAD binding"/>
    <property type="evidence" value="ECO:0007669"/>
    <property type="project" value="UniProtKB-ARBA"/>
</dbReference>
<dbReference type="GO" id="GO:0003951">
    <property type="term" value="F:NAD+ kinase activity"/>
    <property type="evidence" value="ECO:0007669"/>
    <property type="project" value="UniProtKB-UniRule"/>
</dbReference>
<dbReference type="GO" id="GO:0019674">
    <property type="term" value="P:NAD metabolic process"/>
    <property type="evidence" value="ECO:0007669"/>
    <property type="project" value="InterPro"/>
</dbReference>
<dbReference type="GO" id="GO:0006741">
    <property type="term" value="P:NADP biosynthetic process"/>
    <property type="evidence" value="ECO:0007669"/>
    <property type="project" value="UniProtKB-UniRule"/>
</dbReference>
<dbReference type="Gene3D" id="3.40.50.10330">
    <property type="entry name" value="Probable inorganic polyphosphate/atp-NAD kinase, domain 1"/>
    <property type="match status" value="1"/>
</dbReference>
<dbReference type="Gene3D" id="2.60.200.30">
    <property type="entry name" value="Probable inorganic polyphosphate/atp-NAD kinase, domain 2"/>
    <property type="match status" value="1"/>
</dbReference>
<dbReference type="HAMAP" id="MF_00361">
    <property type="entry name" value="NAD_kinase"/>
    <property type="match status" value="1"/>
</dbReference>
<dbReference type="InterPro" id="IPR017438">
    <property type="entry name" value="ATP-NAD_kinase_N"/>
</dbReference>
<dbReference type="InterPro" id="IPR017437">
    <property type="entry name" value="ATP-NAD_kinase_PpnK-typ_C"/>
</dbReference>
<dbReference type="InterPro" id="IPR016064">
    <property type="entry name" value="NAD/diacylglycerol_kinase_sf"/>
</dbReference>
<dbReference type="InterPro" id="IPR002504">
    <property type="entry name" value="NADK"/>
</dbReference>
<dbReference type="NCBIfam" id="NF003424">
    <property type="entry name" value="PRK04885.1"/>
    <property type="match status" value="1"/>
</dbReference>
<dbReference type="PANTHER" id="PTHR20275">
    <property type="entry name" value="NAD KINASE"/>
    <property type="match status" value="1"/>
</dbReference>
<dbReference type="PANTHER" id="PTHR20275:SF0">
    <property type="entry name" value="NAD KINASE"/>
    <property type="match status" value="1"/>
</dbReference>
<dbReference type="Pfam" id="PF01513">
    <property type="entry name" value="NAD_kinase"/>
    <property type="match status" value="1"/>
</dbReference>
<dbReference type="Pfam" id="PF20143">
    <property type="entry name" value="NAD_kinase_C"/>
    <property type="match status" value="1"/>
</dbReference>
<dbReference type="SUPFAM" id="SSF111331">
    <property type="entry name" value="NAD kinase/diacylglycerol kinase-like"/>
    <property type="match status" value="1"/>
</dbReference>